<keyword id="KW-0007">Acetylation</keyword>
<keyword id="KW-0963">Cytoplasm</keyword>
<keyword id="KW-0521">NADP</keyword>
<keyword id="KW-0560">Oxidoreductase</keyword>
<keyword id="KW-0597">Phosphoprotein</keyword>
<keyword id="KW-1185">Reference proteome</keyword>
<keyword id="KW-0694">RNA-binding</keyword>
<name>QOR_MOUSE</name>
<comment type="function">
    <text evidence="1">Does not have alcohol dehydrogenase activity. Binds NADP and acts through a one-electron transfer process. Orthoquinones, such as 1,2-naphthoquinone or 9,10-phenanthrenequinone, are the best substrates (in vitro). May act in the detoxification of xenobiotics. Interacts with (AU)-rich elements (ARE) in the 3'-UTR of target mRNA species and enhances their stability. NADPH binding interferes with mRNA binding (By similarity).</text>
</comment>
<comment type="catalytic activity">
    <reaction>
        <text>2 a quinone + NADPH + H(+) = 2 a 1,4-benzosemiquinone + NADP(+)</text>
        <dbReference type="Rhea" id="RHEA:14269"/>
        <dbReference type="ChEBI" id="CHEBI:15378"/>
        <dbReference type="ChEBI" id="CHEBI:57783"/>
        <dbReference type="ChEBI" id="CHEBI:58349"/>
        <dbReference type="ChEBI" id="CHEBI:132124"/>
        <dbReference type="ChEBI" id="CHEBI:134225"/>
        <dbReference type="EC" id="1.6.5.5"/>
    </reaction>
</comment>
<comment type="subunit">
    <text evidence="1">Homotetramer.</text>
</comment>
<comment type="subcellular location">
    <subcellularLocation>
        <location evidence="1">Cytoplasm</location>
    </subcellularLocation>
</comment>
<comment type="similarity">
    <text evidence="3">Belongs to the zinc-containing alcohol dehydrogenase family. Quinone oxidoreductase subfamily.</text>
</comment>
<reference key="1">
    <citation type="journal article" date="1994" name="Mol. Biol. Evol.">
        <title>Comparative analysis of the zeta-crystallin/quinone reductase gene in guinea pig and mouse.</title>
        <authorList>
            <person name="Gonzalez P."/>
            <person name="Hernandez-Calzadilla C."/>
            <person name="Rao P.V."/>
            <person name="Rodriguez I.R."/>
            <person name="Zigler J.S. Jr."/>
            <person name="Borras T."/>
        </authorList>
    </citation>
    <scope>NUCLEOTIDE SEQUENCE [MRNA]</scope>
    <source>
        <tissue>Liver</tissue>
    </source>
</reference>
<reference key="2">
    <citation type="journal article" date="2004" name="Genome Res.">
        <title>The status, quality, and expansion of the NIH full-length cDNA project: the Mammalian Gene Collection (MGC).</title>
        <authorList>
            <consortium name="The MGC Project Team"/>
        </authorList>
    </citation>
    <scope>NUCLEOTIDE SEQUENCE [LARGE SCALE MRNA]</scope>
    <source>
        <tissue>Mammary tumor</tissue>
    </source>
</reference>
<reference key="3">
    <citation type="journal article" date="1996" name="Biochem. Biophys. Res. Commun.">
        <title>Molecular characterization of seizure-related genes isolated by differential screening.</title>
        <authorList>
            <person name="Kajiwara K."/>
            <person name="Nagawawa H."/>
            <person name="Shimizu-Nishikawa K."/>
            <person name="Ookura T."/>
            <person name="Kimura M."/>
            <person name="Sugaya E."/>
        </authorList>
    </citation>
    <scope>NUCLEOTIDE SEQUENCE [MRNA] OF 130-331</scope>
    <source>
        <strain>C57BL/6J</strain>
        <tissue>Brain cortex</tissue>
    </source>
</reference>
<reference key="4">
    <citation type="journal article" date="2010" name="Cell">
        <title>A tissue-specific atlas of mouse protein phosphorylation and expression.</title>
        <authorList>
            <person name="Huttlin E.L."/>
            <person name="Jedrychowski M.P."/>
            <person name="Elias J.E."/>
            <person name="Goswami T."/>
            <person name="Rad R."/>
            <person name="Beausoleil S.A."/>
            <person name="Villen J."/>
            <person name="Haas W."/>
            <person name="Sowa M.E."/>
            <person name="Gygi S.P."/>
        </authorList>
    </citation>
    <scope>PHOSPHORYLATION [LARGE SCALE ANALYSIS] AT SER-35</scope>
    <scope>IDENTIFICATION BY MASS SPECTROMETRY [LARGE SCALE ANALYSIS]</scope>
    <source>
        <tissue>Brain</tissue>
        <tissue>Brown adipose tissue</tissue>
        <tissue>Heart</tissue>
        <tissue>Kidney</tissue>
        <tissue>Liver</tissue>
        <tissue>Lung</tissue>
        <tissue>Pancreas</tissue>
        <tissue>Spleen</tissue>
        <tissue>Testis</tissue>
    </source>
</reference>
<reference key="5">
    <citation type="journal article" date="2013" name="Mol. Cell">
        <title>SIRT5-mediated lysine desuccinylation impacts diverse metabolic pathways.</title>
        <authorList>
            <person name="Park J."/>
            <person name="Chen Y."/>
            <person name="Tishkoff D.X."/>
            <person name="Peng C."/>
            <person name="Tan M."/>
            <person name="Dai L."/>
            <person name="Xie Z."/>
            <person name="Zhang Y."/>
            <person name="Zwaans B.M."/>
            <person name="Skinner M.E."/>
            <person name="Lombard D.B."/>
            <person name="Zhao Y."/>
        </authorList>
    </citation>
    <scope>SUCCINYLATION [LARGE SCALE ANALYSIS] AT LYS-298</scope>
    <scope>IDENTIFICATION BY MASS SPECTROMETRY [LARGE SCALE ANALYSIS]</scope>
    <source>
        <tissue>Liver</tissue>
    </source>
</reference>
<reference key="6">
    <citation type="journal article" date="2013" name="Proc. Natl. Acad. Sci. U.S.A.">
        <title>Label-free quantitative proteomics of the lysine acetylome in mitochondria identifies substrates of SIRT3 in metabolic pathways.</title>
        <authorList>
            <person name="Rardin M.J."/>
            <person name="Newman J.C."/>
            <person name="Held J.M."/>
            <person name="Cusack M.P."/>
            <person name="Sorensen D.J."/>
            <person name="Li B."/>
            <person name="Schilling B."/>
            <person name="Mooney S.D."/>
            <person name="Kahn C.R."/>
            <person name="Verdin E."/>
            <person name="Gibson B.W."/>
        </authorList>
    </citation>
    <scope>ACETYLATION [LARGE SCALE ANALYSIS] AT LYS-186</scope>
    <scope>IDENTIFICATION BY MASS SPECTROMETRY [LARGE SCALE ANALYSIS]</scope>
    <source>
        <tissue>Liver</tissue>
    </source>
</reference>
<protein>
    <recommendedName>
        <fullName>Quinone oxidoreductase</fullName>
        <ecNumber>1.6.5.5</ecNumber>
    </recommendedName>
    <alternativeName>
        <fullName>NADPH:quinone reductase</fullName>
    </alternativeName>
    <alternativeName>
        <fullName>Zeta-crystallin</fullName>
    </alternativeName>
</protein>
<sequence>MATGQKLMRAIRVFEFGGPEVLKLQSDVVVPVPQSHQVLIKVHACGVNPVETYIRSGAYSRKPALPYTPGSDVAGIIESVGDKVSAFKKGDRVFCYSTVSGGYAEFALAADDTIYPLPETLNFRQGAALGIPYFTACRALFHSARARAGESVLVHGASGGVGLATCQIARAHGLKVLGTAGSEEGKKLVLQNGAHEVFNHKEANYIDKIKMSVGDKDKGVDVIIEMLANENLSNDLKLLSHGGRVVVVGCRGPIEINPRDTMAKETSIIGVSLSSSTKEEFQQFAGLLQAGIEKGWVKPVIGSEYPLEKAAQAHEDIIHGSGKTGKMILLL</sequence>
<accession>P47199</accession>
<accession>Q62508</accession>
<accession>Q99L63</accession>
<proteinExistence type="evidence at protein level"/>
<gene>
    <name type="primary">Cryz</name>
</gene>
<evidence type="ECO:0000250" key="1"/>
<evidence type="ECO:0000250" key="2">
    <source>
        <dbReference type="UniProtKB" id="Q08257"/>
    </source>
</evidence>
<evidence type="ECO:0000305" key="3"/>
<evidence type="ECO:0007744" key="4">
    <source>
    </source>
</evidence>
<evidence type="ECO:0007744" key="5">
    <source>
    </source>
</evidence>
<evidence type="ECO:0007744" key="6">
    <source>
    </source>
</evidence>
<organism>
    <name type="scientific">Mus musculus</name>
    <name type="common">Mouse</name>
    <dbReference type="NCBI Taxonomy" id="10090"/>
    <lineage>
        <taxon>Eukaryota</taxon>
        <taxon>Metazoa</taxon>
        <taxon>Chordata</taxon>
        <taxon>Craniata</taxon>
        <taxon>Vertebrata</taxon>
        <taxon>Euteleostomi</taxon>
        <taxon>Mammalia</taxon>
        <taxon>Eutheria</taxon>
        <taxon>Euarchontoglires</taxon>
        <taxon>Glires</taxon>
        <taxon>Rodentia</taxon>
        <taxon>Myomorpha</taxon>
        <taxon>Muroidea</taxon>
        <taxon>Muridae</taxon>
        <taxon>Murinae</taxon>
        <taxon>Mus</taxon>
        <taxon>Mus</taxon>
    </lineage>
</organism>
<dbReference type="EC" id="1.6.5.5"/>
<dbReference type="EMBL" id="S70056">
    <property type="protein sequence ID" value="AAB30620.2"/>
    <property type="molecule type" value="mRNA"/>
</dbReference>
<dbReference type="EMBL" id="BC003800">
    <property type="protein sequence ID" value="AAH03800.1"/>
    <property type="molecule type" value="mRNA"/>
</dbReference>
<dbReference type="EMBL" id="D78646">
    <property type="protein sequence ID" value="BAA11463.1"/>
    <property type="molecule type" value="mRNA"/>
</dbReference>
<dbReference type="CCDS" id="CCDS17927.1"/>
<dbReference type="PIR" id="A54932">
    <property type="entry name" value="A54932"/>
</dbReference>
<dbReference type="RefSeq" id="NP_001344601.1">
    <property type="nucleotide sequence ID" value="NM_001357672.1"/>
</dbReference>
<dbReference type="RefSeq" id="NP_001344602.1">
    <property type="nucleotide sequence ID" value="NM_001357673.1"/>
</dbReference>
<dbReference type="RefSeq" id="NP_001344603.1">
    <property type="nucleotide sequence ID" value="NM_001357674.1"/>
</dbReference>
<dbReference type="RefSeq" id="NP_001344604.1">
    <property type="nucleotide sequence ID" value="NM_001357675.1"/>
</dbReference>
<dbReference type="RefSeq" id="NP_001344605.1">
    <property type="nucleotide sequence ID" value="NM_001357676.1"/>
</dbReference>
<dbReference type="RefSeq" id="NP_034098.1">
    <property type="nucleotide sequence ID" value="NM_009968.4"/>
</dbReference>
<dbReference type="RefSeq" id="XP_006501036.1">
    <property type="nucleotide sequence ID" value="XM_006500973.2"/>
</dbReference>
<dbReference type="RefSeq" id="XP_011238308.1">
    <property type="nucleotide sequence ID" value="XM_011240006.1"/>
</dbReference>
<dbReference type="SMR" id="P47199"/>
<dbReference type="BioGRID" id="198924">
    <property type="interactions" value="5"/>
</dbReference>
<dbReference type="FunCoup" id="P47199">
    <property type="interactions" value="1510"/>
</dbReference>
<dbReference type="IntAct" id="P47199">
    <property type="interactions" value="1"/>
</dbReference>
<dbReference type="STRING" id="10090.ENSMUSP00000029850"/>
<dbReference type="BindingDB" id="P47199"/>
<dbReference type="ChEMBL" id="CHEMBL4332"/>
<dbReference type="GlyGen" id="P47199">
    <property type="glycosylation" value="2 sites, 1 O-linked glycan (2 sites)"/>
</dbReference>
<dbReference type="iPTMnet" id="P47199"/>
<dbReference type="PhosphoSitePlus" id="P47199"/>
<dbReference type="SwissPalm" id="P47199"/>
<dbReference type="REPRODUCTION-2DPAGE" id="IPI00134704"/>
<dbReference type="REPRODUCTION-2DPAGE" id="P47199"/>
<dbReference type="CPTAC" id="non-CPTAC-3666"/>
<dbReference type="jPOST" id="P47199"/>
<dbReference type="PaxDb" id="10090-ENSMUSP00000029850"/>
<dbReference type="PeptideAtlas" id="P47199"/>
<dbReference type="ProteomicsDB" id="301906"/>
<dbReference type="Pumba" id="P47199"/>
<dbReference type="Antibodypedia" id="19697">
    <property type="antibodies" value="112 antibodies from 21 providers"/>
</dbReference>
<dbReference type="DNASU" id="12972"/>
<dbReference type="Ensembl" id="ENSMUST00000029850.15">
    <property type="protein sequence ID" value="ENSMUSP00000029850.9"/>
    <property type="gene ID" value="ENSMUSG00000028199.19"/>
</dbReference>
<dbReference type="Ensembl" id="ENSMUST00000192462.6">
    <property type="protein sequence ID" value="ENSMUSP00000142105.2"/>
    <property type="gene ID" value="ENSMUSG00000028199.19"/>
</dbReference>
<dbReference type="GeneID" id="12972"/>
<dbReference type="KEGG" id="mmu:12972"/>
<dbReference type="UCSC" id="uc008rup.3">
    <property type="organism name" value="mouse"/>
</dbReference>
<dbReference type="AGR" id="MGI:88527"/>
<dbReference type="CTD" id="1429"/>
<dbReference type="MGI" id="MGI:88527">
    <property type="gene designation" value="Cryz"/>
</dbReference>
<dbReference type="VEuPathDB" id="HostDB:ENSMUSG00000028199"/>
<dbReference type="eggNOG" id="KOG1198">
    <property type="taxonomic scope" value="Eukaryota"/>
</dbReference>
<dbReference type="GeneTree" id="ENSGT00940000154882"/>
<dbReference type="InParanoid" id="P47199"/>
<dbReference type="OMA" id="KGMTAHY"/>
<dbReference type="OrthoDB" id="3941538at2759"/>
<dbReference type="PhylomeDB" id="P47199"/>
<dbReference type="TreeFam" id="TF314255"/>
<dbReference type="BioGRID-ORCS" id="12972">
    <property type="hits" value="2 hits in 80 CRISPR screens"/>
</dbReference>
<dbReference type="PRO" id="PR:P47199"/>
<dbReference type="Proteomes" id="UP000000589">
    <property type="component" value="Chromosome 3"/>
</dbReference>
<dbReference type="RNAct" id="P47199">
    <property type="molecule type" value="protein"/>
</dbReference>
<dbReference type="Bgee" id="ENSMUSG00000028199">
    <property type="expression patterns" value="Expressed in adult mammalian kidney and 249 other cell types or tissues"/>
</dbReference>
<dbReference type="ExpressionAtlas" id="P47199">
    <property type="expression patterns" value="baseline and differential"/>
</dbReference>
<dbReference type="GO" id="GO:0005829">
    <property type="term" value="C:cytosol"/>
    <property type="evidence" value="ECO:0000250"/>
    <property type="project" value="UniProtKB"/>
</dbReference>
<dbReference type="GO" id="GO:0042802">
    <property type="term" value="F:identical protein binding"/>
    <property type="evidence" value="ECO:0007669"/>
    <property type="project" value="Ensembl"/>
</dbReference>
<dbReference type="GO" id="GO:0003730">
    <property type="term" value="F:mRNA 3'-UTR binding"/>
    <property type="evidence" value="ECO:0000250"/>
    <property type="project" value="UniProtKB"/>
</dbReference>
<dbReference type="GO" id="GO:0050661">
    <property type="term" value="F:NADP binding"/>
    <property type="evidence" value="ECO:0000266"/>
    <property type="project" value="MGI"/>
</dbReference>
<dbReference type="GO" id="GO:0070402">
    <property type="term" value="F:NADPH binding"/>
    <property type="evidence" value="ECO:0000250"/>
    <property type="project" value="UniProtKB"/>
</dbReference>
<dbReference type="GO" id="GO:0003960">
    <property type="term" value="F:NADPH:quinone reductase activity"/>
    <property type="evidence" value="ECO:0000250"/>
    <property type="project" value="UniProtKB"/>
</dbReference>
<dbReference type="GO" id="GO:0008270">
    <property type="term" value="F:zinc ion binding"/>
    <property type="evidence" value="ECO:0007669"/>
    <property type="project" value="InterPro"/>
</dbReference>
<dbReference type="GO" id="GO:0051289">
    <property type="term" value="P:protein homotetramerization"/>
    <property type="evidence" value="ECO:0007669"/>
    <property type="project" value="Ensembl"/>
</dbReference>
<dbReference type="GO" id="GO:0042178">
    <property type="term" value="P:xenobiotic catabolic process"/>
    <property type="evidence" value="ECO:0000250"/>
    <property type="project" value="UniProtKB"/>
</dbReference>
<dbReference type="CDD" id="cd08253">
    <property type="entry name" value="zeta_crystallin"/>
    <property type="match status" value="1"/>
</dbReference>
<dbReference type="FunFam" id="3.90.180.10:FF:000016">
    <property type="entry name" value="Quinone oxidoreductase"/>
    <property type="match status" value="1"/>
</dbReference>
<dbReference type="FunFam" id="3.40.50.720:FF:000244">
    <property type="entry name" value="quinone oxidoreductase"/>
    <property type="match status" value="1"/>
</dbReference>
<dbReference type="Gene3D" id="3.90.180.10">
    <property type="entry name" value="Medium-chain alcohol dehydrogenases, catalytic domain"/>
    <property type="match status" value="1"/>
</dbReference>
<dbReference type="Gene3D" id="3.40.50.720">
    <property type="entry name" value="NAD(P)-binding Rossmann-like Domain"/>
    <property type="match status" value="1"/>
</dbReference>
<dbReference type="InterPro" id="IPR013149">
    <property type="entry name" value="ADH-like_C"/>
</dbReference>
<dbReference type="InterPro" id="IPR013154">
    <property type="entry name" value="ADH-like_N"/>
</dbReference>
<dbReference type="InterPro" id="IPR011032">
    <property type="entry name" value="GroES-like_sf"/>
</dbReference>
<dbReference type="InterPro" id="IPR036291">
    <property type="entry name" value="NAD(P)-bd_dom_sf"/>
</dbReference>
<dbReference type="InterPro" id="IPR020843">
    <property type="entry name" value="PKS_ER"/>
</dbReference>
<dbReference type="InterPro" id="IPR002364">
    <property type="entry name" value="Quin_OxRdtase/zeta-crystal_CS"/>
</dbReference>
<dbReference type="InterPro" id="IPR051603">
    <property type="entry name" value="Zinc-ADH_QOR/CCCR"/>
</dbReference>
<dbReference type="PANTHER" id="PTHR44154">
    <property type="entry name" value="QUINONE OXIDOREDUCTASE"/>
    <property type="match status" value="1"/>
</dbReference>
<dbReference type="PANTHER" id="PTHR44154:SF1">
    <property type="entry name" value="QUINONE OXIDOREDUCTASE"/>
    <property type="match status" value="1"/>
</dbReference>
<dbReference type="Pfam" id="PF08240">
    <property type="entry name" value="ADH_N"/>
    <property type="match status" value="1"/>
</dbReference>
<dbReference type="Pfam" id="PF00107">
    <property type="entry name" value="ADH_zinc_N"/>
    <property type="match status" value="1"/>
</dbReference>
<dbReference type="SMART" id="SM00829">
    <property type="entry name" value="PKS_ER"/>
    <property type="match status" value="1"/>
</dbReference>
<dbReference type="SUPFAM" id="SSF50129">
    <property type="entry name" value="GroES-like"/>
    <property type="match status" value="1"/>
</dbReference>
<dbReference type="SUPFAM" id="SSF51735">
    <property type="entry name" value="NAD(P)-binding Rossmann-fold domains"/>
    <property type="match status" value="1"/>
</dbReference>
<dbReference type="PROSITE" id="PS01162">
    <property type="entry name" value="QOR_ZETA_CRYSTAL"/>
    <property type="match status" value="1"/>
</dbReference>
<feature type="initiator methionine" description="Removed" evidence="2">
    <location>
        <position position="1"/>
    </location>
</feature>
<feature type="chain" id="PRO_0000160908" description="Quinone oxidoreductase">
    <location>
        <begin position="2"/>
        <end position="331"/>
    </location>
</feature>
<feature type="binding site" evidence="1">
    <location>
        <position position="53"/>
    </location>
    <ligand>
        <name>NADP(+)</name>
        <dbReference type="ChEBI" id="CHEBI:58349"/>
    </ligand>
</feature>
<feature type="binding site" evidence="1">
    <location>
        <begin position="158"/>
        <end position="161"/>
    </location>
    <ligand>
        <name>NADP(+)</name>
        <dbReference type="ChEBI" id="CHEBI:58349"/>
    </ligand>
</feature>
<feature type="binding site" evidence="1">
    <location>
        <position position="181"/>
    </location>
    <ligand>
        <name>NADP(+)</name>
        <dbReference type="ChEBI" id="CHEBI:58349"/>
    </ligand>
</feature>
<feature type="binding site" evidence="1">
    <location>
        <position position="200"/>
    </location>
    <ligand>
        <name>NADP(+)</name>
        <dbReference type="ChEBI" id="CHEBI:58349"/>
    </ligand>
</feature>
<feature type="binding site" evidence="1">
    <location>
        <position position="231"/>
    </location>
    <ligand>
        <name>NADP(+)</name>
        <dbReference type="ChEBI" id="CHEBI:58349"/>
    </ligand>
</feature>
<feature type="binding site" evidence="1">
    <location>
        <begin position="248"/>
        <end position="251"/>
    </location>
    <ligand>
        <name>NADP(+)</name>
        <dbReference type="ChEBI" id="CHEBI:58349"/>
    </ligand>
</feature>
<feature type="binding site" evidence="1">
    <location>
        <begin position="271"/>
        <end position="273"/>
    </location>
    <ligand>
        <name>NADP(+)</name>
        <dbReference type="ChEBI" id="CHEBI:58349"/>
    </ligand>
</feature>
<feature type="modified residue" description="N-acetylalanine" evidence="2">
    <location>
        <position position="2"/>
    </location>
</feature>
<feature type="modified residue" description="N6-acetyllysine" evidence="2">
    <location>
        <position position="23"/>
    </location>
</feature>
<feature type="modified residue" description="Phosphoserine" evidence="4">
    <location>
        <position position="35"/>
    </location>
</feature>
<feature type="modified residue" description="N6-acetyllysine" evidence="5">
    <location>
        <position position="186"/>
    </location>
</feature>
<feature type="modified residue" description="N6-succinyllysine" evidence="6">
    <location>
        <position position="298"/>
    </location>
</feature>
<feature type="sequence conflict" description="In Ref. 2; AAH03800." evidence="3" ref="2">
    <original>A</original>
    <variation>T</variation>
    <location>
        <position position="58"/>
    </location>
</feature>
<feature type="sequence conflict" description="In Ref. 3; BAA11463." evidence="3" ref="3">
    <original>IPY</original>
    <variation>TMD</variation>
    <location>
        <begin position="131"/>
        <end position="133"/>
    </location>
</feature>